<dbReference type="EC" id="2.7.7.49" evidence="3 4 5 8"/>
<dbReference type="EMBL" id="AF062652">
    <property type="protein sequence ID" value="AAC39135.1"/>
    <property type="molecule type" value="Genomic_DNA"/>
</dbReference>
<dbReference type="EMBL" id="AF061284">
    <property type="protein sequence ID" value="AAC39140.1"/>
    <property type="molecule type" value="mRNA"/>
</dbReference>
<dbReference type="EMBL" id="GG662798">
    <property type="protein sequence ID" value="EAR90406.3"/>
    <property type="molecule type" value="Genomic_DNA"/>
</dbReference>
<dbReference type="PIR" id="T14891">
    <property type="entry name" value="T14891"/>
</dbReference>
<dbReference type="RefSeq" id="XP_001010651.3">
    <property type="nucleotide sequence ID" value="XM_001010651.3"/>
</dbReference>
<dbReference type="PDB" id="2B2A">
    <property type="method" value="X-ray"/>
    <property type="resolution" value="2.22 A"/>
    <property type="chains" value="A/B/C=2-191"/>
</dbReference>
<dbReference type="PDB" id="2R4G">
    <property type="method" value="X-ray"/>
    <property type="resolution" value="1.71 A"/>
    <property type="chains" value="A=254-519"/>
</dbReference>
<dbReference type="PDB" id="5C9H">
    <property type="method" value="X-ray"/>
    <property type="resolution" value="3.00 A"/>
    <property type="chains" value="A/B=217-516"/>
</dbReference>
<dbReference type="PDB" id="6D6V">
    <property type="method" value="EM"/>
    <property type="resolution" value="4.80 A"/>
    <property type="chains" value="A=1-1117"/>
</dbReference>
<dbReference type="PDB" id="7LMA">
    <property type="method" value="EM"/>
    <property type="resolution" value="3.30 A"/>
    <property type="chains" value="A=1-1117"/>
</dbReference>
<dbReference type="PDB" id="7LMB">
    <property type="method" value="EM"/>
    <property type="resolution" value="3.80 A"/>
    <property type="chains" value="A=1-1117"/>
</dbReference>
<dbReference type="PDB" id="7UY5">
    <property type="method" value="EM"/>
    <property type="resolution" value="3.50 A"/>
    <property type="chains" value="A=1-1117"/>
</dbReference>
<dbReference type="PDB" id="7UY6">
    <property type="method" value="EM"/>
    <property type="resolution" value="2.90 A"/>
    <property type="chains" value="A=1-1117"/>
</dbReference>
<dbReference type="PDB" id="8GAP">
    <property type="method" value="EM"/>
    <property type="resolution" value="3.80 A"/>
    <property type="chains" value="A=1-1117"/>
</dbReference>
<dbReference type="PDBsum" id="2B2A"/>
<dbReference type="PDBsum" id="2R4G"/>
<dbReference type="PDBsum" id="5C9H"/>
<dbReference type="PDBsum" id="6D6V"/>
<dbReference type="PDBsum" id="7LMA"/>
<dbReference type="PDBsum" id="7LMB"/>
<dbReference type="PDBsum" id="7UY5"/>
<dbReference type="PDBsum" id="7UY6"/>
<dbReference type="PDBsum" id="8GAP"/>
<dbReference type="EMDB" id="EMD-23437"/>
<dbReference type="EMDB" id="EMD-23439"/>
<dbReference type="EMDB" id="EMD-26863"/>
<dbReference type="EMDB" id="EMD-26865"/>
<dbReference type="EMDB" id="EMD-29903"/>
<dbReference type="EMDB" id="EMD-7821"/>
<dbReference type="SMR" id="O77448"/>
<dbReference type="DIP" id="DIP-60200N"/>
<dbReference type="DIP" id="DIP-61863N"/>
<dbReference type="IntAct" id="O77448">
    <property type="interactions" value="8"/>
</dbReference>
<dbReference type="STRING" id="312017.Q22ZB5"/>
<dbReference type="EnsemblProtists" id="EAR90406">
    <property type="protein sequence ID" value="EAR90406"/>
    <property type="gene ID" value="TTHERM_00112560"/>
</dbReference>
<dbReference type="GeneID" id="7843517"/>
<dbReference type="KEGG" id="tet:TTHERM_00112560"/>
<dbReference type="eggNOG" id="KOG1005">
    <property type="taxonomic scope" value="Eukaryota"/>
</dbReference>
<dbReference type="HOGENOM" id="CLU_282497_0_0_1"/>
<dbReference type="InParanoid" id="O77448"/>
<dbReference type="OrthoDB" id="289721at2759"/>
<dbReference type="BRENDA" id="2.7.7.49">
    <property type="organism ID" value="6245"/>
</dbReference>
<dbReference type="EvolutionaryTrace" id="O77448"/>
<dbReference type="Proteomes" id="UP000009168">
    <property type="component" value="Unassembled WGS sequence"/>
</dbReference>
<dbReference type="GO" id="GO:0000781">
    <property type="term" value="C:chromosome, telomeric region"/>
    <property type="evidence" value="ECO:0007669"/>
    <property type="project" value="UniProtKB-SubCell"/>
</dbReference>
<dbReference type="GO" id="GO:0000333">
    <property type="term" value="C:telomerase catalytic core complex"/>
    <property type="evidence" value="ECO:0007669"/>
    <property type="project" value="TreeGrafter"/>
</dbReference>
<dbReference type="GO" id="GO:0005697">
    <property type="term" value="C:telomerase holoenzyme complex"/>
    <property type="evidence" value="ECO:0000314"/>
    <property type="project" value="UniProtKB"/>
</dbReference>
<dbReference type="GO" id="GO:0046872">
    <property type="term" value="F:metal ion binding"/>
    <property type="evidence" value="ECO:0007669"/>
    <property type="project" value="UniProtKB-KW"/>
</dbReference>
<dbReference type="GO" id="GO:0003720">
    <property type="term" value="F:telomerase activity"/>
    <property type="evidence" value="ECO:0000314"/>
    <property type="project" value="UniProtKB"/>
</dbReference>
<dbReference type="GO" id="GO:0070034">
    <property type="term" value="F:telomerase RNA binding"/>
    <property type="evidence" value="ECO:0000314"/>
    <property type="project" value="UniProtKB"/>
</dbReference>
<dbReference type="GO" id="GO:0042162">
    <property type="term" value="F:telomeric DNA binding"/>
    <property type="evidence" value="ECO:0000314"/>
    <property type="project" value="UniProtKB"/>
</dbReference>
<dbReference type="GO" id="GO:0007004">
    <property type="term" value="P:telomere maintenance via telomerase"/>
    <property type="evidence" value="ECO:0000314"/>
    <property type="project" value="UniProtKB"/>
</dbReference>
<dbReference type="CDD" id="cd01648">
    <property type="entry name" value="TERT"/>
    <property type="match status" value="1"/>
</dbReference>
<dbReference type="Gene3D" id="1.10.132.70">
    <property type="match status" value="2"/>
</dbReference>
<dbReference type="Gene3D" id="3.30.70.2630">
    <property type="match status" value="1"/>
</dbReference>
<dbReference type="Gene3D" id="1.10.10.1970">
    <property type="entry name" value="TERT catalytic subunit-like"/>
    <property type="match status" value="1"/>
</dbReference>
<dbReference type="IDEAL" id="IID50305"/>
<dbReference type="InterPro" id="IPR000477">
    <property type="entry name" value="RT_dom"/>
</dbReference>
<dbReference type="InterPro" id="IPR021891">
    <property type="entry name" value="Telomerase_RBD"/>
</dbReference>
<dbReference type="InterPro" id="IPR003545">
    <property type="entry name" value="Telomerase_RT"/>
</dbReference>
<dbReference type="InterPro" id="IPR049915">
    <property type="entry name" value="TERT_TEN"/>
</dbReference>
<dbReference type="PANTHER" id="PTHR12066">
    <property type="entry name" value="TELOMERASE REVERSE TRANSCRIPTASE"/>
    <property type="match status" value="1"/>
</dbReference>
<dbReference type="PANTHER" id="PTHR12066:SF0">
    <property type="entry name" value="TELOMERASE REVERSE TRANSCRIPTASE"/>
    <property type="match status" value="1"/>
</dbReference>
<dbReference type="Pfam" id="PF23119">
    <property type="entry name" value="CTE_TERT"/>
    <property type="match status" value="1"/>
</dbReference>
<dbReference type="Pfam" id="PF00078">
    <property type="entry name" value="RVT_1"/>
    <property type="match status" value="1"/>
</dbReference>
<dbReference type="Pfam" id="PF12009">
    <property type="entry name" value="Telomerase_RBD"/>
    <property type="match status" value="1"/>
</dbReference>
<dbReference type="Pfam" id="PF11474">
    <property type="entry name" value="TEN_TERT"/>
    <property type="match status" value="1"/>
</dbReference>
<dbReference type="PRINTS" id="PR01365">
    <property type="entry name" value="TELOMERASERT"/>
</dbReference>
<dbReference type="SMART" id="SM00975">
    <property type="entry name" value="Telomerase_RBD"/>
    <property type="match status" value="1"/>
</dbReference>
<dbReference type="PROSITE" id="PS50878">
    <property type="entry name" value="RT_POL"/>
    <property type="match status" value="1"/>
</dbReference>
<feature type="chain" id="PRO_0000054929" description="Telomerase reverse transcriptase">
    <location>
        <begin position="1"/>
        <end position="1117"/>
    </location>
</feature>
<feature type="domain" description="Reverse transcriptase" evidence="1">
    <location>
        <begin position="517"/>
        <end position="881"/>
    </location>
</feature>
<feature type="region of interest" description="TEN" evidence="15">
    <location>
        <begin position="1"/>
        <end position="191"/>
    </location>
</feature>
<feature type="region of interest" description="RBD" evidence="15">
    <location>
        <begin position="217"/>
        <end position="519"/>
    </location>
</feature>
<feature type="region of interest" description="RT" evidence="15">
    <location>
        <begin position="520"/>
        <end position="887"/>
    </location>
</feature>
<feature type="region of interest" description="TRAP" evidence="15">
    <location>
        <begin position="638"/>
        <end position="742"/>
    </location>
</feature>
<feature type="region of interest" description="CTE" evidence="15">
    <location>
        <begin position="888"/>
        <end position="1117"/>
    </location>
</feature>
<feature type="binding site" evidence="1">
    <location>
        <position position="618"/>
    </location>
    <ligand>
        <name>Mg(2+)</name>
        <dbReference type="ChEBI" id="CHEBI:18420"/>
        <note>catalytic</note>
    </ligand>
</feature>
<feature type="binding site" evidence="1 14">
    <location>
        <position position="815"/>
    </location>
    <ligand>
        <name>Mg(2+)</name>
        <dbReference type="ChEBI" id="CHEBI:18420"/>
        <note>catalytic</note>
    </ligand>
</feature>
<feature type="binding site" evidence="1">
    <location>
        <position position="816"/>
    </location>
    <ligand>
        <name>Mg(2+)</name>
        <dbReference type="ChEBI" id="CHEBI:18420"/>
        <note>catalytic</note>
    </ligand>
</feature>
<feature type="mutagenesis site" description="Decreased reverse transcriptase activity." evidence="10">
    <original>K</original>
    <variation>A</variation>
    <location>
        <position position="90"/>
    </location>
</feature>
<feature type="mutagenesis site" description="Decreased reverse transcriptase activity; does not affect DNA-binding." evidence="5">
    <original>D</original>
    <variation>A</variation>
    <location>
        <position position="94"/>
    </location>
</feature>
<feature type="mutagenesis site" description="Does not affect reverse transcriptase activity." evidence="5">
    <original>K</original>
    <variation>A</variation>
    <location>
        <position position="103"/>
    </location>
</feature>
<feature type="mutagenesis site" description="Decreased reverse transcriptase activity." evidence="10">
    <original>R</original>
    <variation>A</variation>
    <location>
        <position position="137"/>
    </location>
</feature>
<feature type="mutagenesis site" description="Does not affect reverse transcriptase activity." evidence="5">
    <original>EE</original>
    <variation>AA</variation>
    <location>
        <begin position="145"/>
        <end position="146"/>
    </location>
</feature>
<feature type="mutagenesis site" description="Abolished reverse transcriptase activity." evidence="3">
    <original>F</original>
    <variation>A</variation>
    <location>
        <position position="158"/>
    </location>
</feature>
<feature type="mutagenesis site" description="Strongly decreased reverse transcriptase activity; strongly decreased DNA-binding." evidence="3 5">
    <original>Q</original>
    <variation>A</variation>
    <location>
        <position position="168"/>
    </location>
</feature>
<feature type="mutagenesis site" description="Does not affect reverse transcriptase activity." evidence="3">
    <original>Q</original>
    <variation>E</variation>
    <location>
        <position position="168"/>
    </location>
</feature>
<feature type="mutagenesis site" description="Decreased reverse transcriptase activity." evidence="3">
    <original>Q</original>
    <variation>N</variation>
    <location>
        <position position="168"/>
    </location>
</feature>
<feature type="mutagenesis site" description="Decreased reverse transcriptase activity." evidence="5">
    <original>L</original>
    <variation>A</variation>
    <location>
        <position position="174"/>
    </location>
</feature>
<feature type="mutagenesis site" description="Strongly decreased reverse transcriptase activity; strongly decreased DNA-binding." evidence="5">
    <original>F</original>
    <variation>A</variation>
    <location>
        <position position="178"/>
    </location>
</feature>
<feature type="mutagenesis site" description="Strongly decreased reverse transcriptase activity." evidence="5">
    <original>KQKKWYK</original>
    <variation>AQAAWYA</variation>
    <location>
        <begin position="183"/>
        <end position="189"/>
    </location>
</feature>
<feature type="mutagenesis site" description="Strongly decreased reverse transcriptase activity." evidence="5">
    <original>KQKK</original>
    <variation>AQAA</variation>
    <location>
        <begin position="183"/>
        <end position="186"/>
    </location>
</feature>
<feature type="mutagenesis site" description="Does not affect reverse transcriptase activity." evidence="5">
    <original>KK</original>
    <variation>AA</variation>
    <location>
        <begin position="185"/>
        <end position="186"/>
    </location>
</feature>
<feature type="mutagenesis site" description="Does not affect reverse transcriptase activity." evidence="5">
    <original>K</original>
    <variation>A</variation>
    <location>
        <position position="185"/>
    </location>
</feature>
<feature type="mutagenesis site" description="Abolished reverse transcriptase activity; strongly decreased DNA-binding." evidence="5">
    <original>W</original>
    <variation>A</variation>
    <location>
        <position position="187"/>
    </location>
</feature>
<feature type="mutagenesis site" description="Does not affect reverse transcriptase activity." evidence="5">
    <original>Y</original>
    <variation>A</variation>
    <location>
        <position position="188"/>
    </location>
</feature>
<feature type="mutagenesis site" description="Slightly decreased reverse transcriptase activity." evidence="5">
    <original>K</original>
    <variation>A</variation>
    <location>
        <position position="189"/>
    </location>
</feature>
<feature type="mutagenesis site" description="Decreased reverse transcriptase activity." evidence="3">
    <original>R</original>
    <variation>A</variation>
    <location>
        <position position="226"/>
    </location>
</feature>
<feature type="mutagenesis site" description="Slightly decreased transcriptase activity." evidence="3">
    <original>F</original>
    <variation>A</variation>
    <location>
        <position position="230"/>
    </location>
</feature>
<feature type="mutagenesis site" description="Slightly decreased transcriptase activity." evidence="3">
    <original>Y</original>
    <variation>A</variation>
    <location>
        <position position="231"/>
    </location>
</feature>
<feature type="mutagenesis site" description="Does not affect reverse transcriptase activity." evidence="3">
    <original>C</original>
    <variation>A</variation>
    <location>
        <position position="232"/>
    </location>
</feature>
<feature type="mutagenesis site" description="Does not affect reverse transcriptase activity." evidence="3">
    <original>H</original>
    <variation>A</variation>
    <location>
        <position position="234"/>
    </location>
</feature>
<feature type="mutagenesis site" description="Decreased reverse transcriptase activity." evidence="3">
    <original>R</original>
    <variation>A</variation>
    <location>
        <position position="237"/>
    </location>
</feature>
<feature type="mutagenesis site" description="Impaired assembly of telomerase holoenzyme, which can be rescued by TAP65/p65." evidence="8">
    <original>L</original>
    <variation>A</variation>
    <location>
        <position position="327"/>
    </location>
</feature>
<feature type="mutagenesis site" description="Does not affect reverse transcriptase activity." evidence="3">
    <original>C</original>
    <variation>A</variation>
    <location>
        <position position="331"/>
    </location>
</feature>
<feature type="mutagenesis site" description="Impaired assembly of telomerase holoenzyme, which can be rescued by TAP65/p65." evidence="8">
    <original>P</original>
    <variation>A</variation>
    <location>
        <position position="334"/>
    </location>
</feature>
<feature type="mutagenesis site" description="Slightly decreased transcriptase activity." evidence="3">
    <original>F</original>
    <variation>A</variation>
    <location>
        <position position="379"/>
    </location>
</feature>
<feature type="mutagenesis site" description="Does not affect reverse transcriptase activity." evidence="3">
    <original>R</original>
    <variation>A</variation>
    <location>
        <position position="381"/>
    </location>
</feature>
<feature type="mutagenesis site" description="Slightly decreased transcriptase activity." evidence="3">
    <original>P</original>
    <variation>A</variation>
    <location>
        <position position="389"/>
    </location>
</feature>
<feature type="mutagenesis site" description="Slightly decreased transcriptase activity." evidence="3">
    <original>W</original>
    <variation>A</variation>
    <location>
        <position position="433"/>
    </location>
</feature>
<feature type="mutagenesis site" description="Does not affect reverse transcriptase activity." evidence="3">
    <original>F</original>
    <variation>A</variation>
    <location>
        <position position="462"/>
    </location>
</feature>
<feature type="mutagenesis site" description="Slightly decreased transcriptase activity." evidence="3">
    <original>R</original>
    <variation>A</variation>
    <location>
        <position position="473"/>
    </location>
</feature>
<feature type="mutagenesis site" description="Does not affect reverse transcriptase activity." evidence="3">
    <original>Y</original>
    <variation>F</variation>
    <location>
        <position position="477"/>
    </location>
</feature>
<feature type="mutagenesis site" description="Slightly decreased transcriptase activity." evidence="3">
    <original>T</original>
    <variation>A</variation>
    <location>
        <position position="479"/>
    </location>
</feature>
<feature type="mutagenesis site" description="Does not affect reverse transcriptase activity." evidence="3">
    <original>E</original>
    <variation>D</variation>
    <location>
        <position position="480"/>
    </location>
</feature>
<feature type="mutagenesis site" description="Slightly decreased transcriptase activity." evidence="3">
    <original>E</original>
    <variation>Q</variation>
    <location>
        <position position="480"/>
    </location>
</feature>
<feature type="mutagenesis site" description="Slightly decreased transcriptase activity." evidence="3">
    <original>R</original>
    <variation>A</variation>
    <location>
        <position position="492"/>
    </location>
</feature>
<feature type="mutagenesis site" description="Does not affect reverse transcriptase activity." evidence="3">
    <original>K</original>
    <variation>A</variation>
    <location>
        <position position="493"/>
    </location>
</feature>
<feature type="mutagenesis site" description="Slightly decreased transcriptase activity." evidence="3">
    <original>K</original>
    <variation>A</variation>
    <location>
        <position position="532"/>
    </location>
</feature>
<feature type="mutagenesis site" description="Does not affect reverse transcriptase activity." evidence="3">
    <original>K</original>
    <variation>R</variation>
    <location>
        <position position="532"/>
    </location>
</feature>
<feature type="mutagenesis site" description="Abolished reverse transcriptase activity." evidence="3">
    <original>R</original>
    <variation>A</variation>
    <location>
        <position position="534"/>
    </location>
</feature>
<feature type="mutagenesis site" description="Slightly decreased transcriptase activity." evidence="3">
    <original>R</original>
    <variation>K</variation>
    <location>
        <position position="534"/>
    </location>
</feature>
<feature type="mutagenesis site" description="Does not affect reverse transcriptase activity." evidence="3">
    <original>K</original>
    <variation>A</variation>
    <location>
        <position position="538"/>
    </location>
</feature>
<feature type="mutagenesis site" description="Does not affect reverse transcriptase activity." evidence="3">
    <original>K</original>
    <variation>A</variation>
    <location>
        <position position="539"/>
    </location>
</feature>
<feature type="mutagenesis site" description="Abolished reverse transcriptase activity." evidence="3">
    <original>F</original>
    <variation>A</variation>
    <location>
        <position position="542"/>
    </location>
</feature>
<feature type="mutagenesis site" description="Slightly decreased transcriptase activity." evidence="3">
    <original>R</original>
    <variation>A</variation>
    <location>
        <position position="543"/>
    </location>
</feature>
<feature type="mutagenesis site" description="Does not affect reverse transcriptase activity." evidence="3">
    <original>R</original>
    <variation>K</variation>
    <location>
        <position position="543"/>
    </location>
</feature>
<feature type="mutagenesis site" description="Abolished reverse transcriptase activity, which cannot be rescued by TAP65/p65." evidence="8">
    <original>D</original>
    <variation>A</variation>
    <location>
        <position position="618"/>
    </location>
</feature>
<feature type="mutagenesis site" description="Decreased reverse transcriptase activity." evidence="3">
    <original>Y</original>
    <variation>A</variation>
    <location>
        <position position="623"/>
    </location>
</feature>
<feature type="mutagenesis site" description="Slightly decreased transcriptase activity." evidence="3">
    <original>D</original>
    <variation>A</variation>
    <location>
        <position position="624"/>
    </location>
</feature>
<feature type="mutagenesis site" description="Slightly decreased transcriptase activity." evidence="3">
    <original>Q</original>
    <variation>A</variation>
    <variation>N</variation>
    <location>
        <position position="767"/>
    </location>
</feature>
<feature type="mutagenesis site" description="Decreased reverse transcriptase activity." evidence="3">
    <original>Q</original>
    <variation>E</variation>
    <location>
        <position position="767"/>
    </location>
</feature>
<feature type="mutagenesis site" description="Slightly decreased transcriptase activity." evidence="3">
    <original>Q</original>
    <variation>A</variation>
    <location>
        <position position="773"/>
    </location>
</feature>
<feature type="mutagenesis site" description="Slightly decreased transcriptase activity." evidence="3">
    <original>S</original>
    <variation>A</variation>
    <location>
        <position position="778"/>
    </location>
</feature>
<feature type="mutagenesis site" description="Abolished reverse transcriptase activity." evidence="3">
    <original>R</original>
    <variation>A</variation>
    <location>
        <position position="812"/>
    </location>
</feature>
<feature type="mutagenesis site" description="Slightly decreased transcriptase activity." evidence="3">
    <original>K</original>
    <variation>A</variation>
    <location>
        <position position="849"/>
    </location>
</feature>
<feature type="mutagenesis site" description="Does not affect reverse transcriptase activity." evidence="3">
    <original>K</original>
    <variation>R</variation>
    <location>
        <position position="849"/>
    </location>
</feature>
<feature type="mutagenesis site" description="Slightly decreased transcriptase activity." evidence="3">
    <original>F</original>
    <variation>A</variation>
    <location>
        <position position="854"/>
    </location>
</feature>
<feature type="mutagenesis site" description="Abolished reverse transcriptase activity." evidence="3">
    <original>W</original>
    <variation>A</variation>
    <location>
        <position position="876"/>
    </location>
</feature>
<feature type="mutagenesis site" description="Decreased reverse transcriptase activity." evidence="3">
    <original>W</original>
    <variation>F</variation>
    <location>
        <position position="876"/>
    </location>
</feature>
<feature type="mutagenesis site" description="Slightly decreased transcriptase activity." evidence="3">
    <original>G</original>
    <variation>A</variation>
    <location>
        <position position="878"/>
    </location>
</feature>
<feature type="mutagenesis site" description="Does not affect reverse transcriptase activity." evidence="3">
    <original>S</original>
    <variation>A</variation>
    <location>
        <position position="880"/>
    </location>
</feature>
<feature type="mutagenesis site" description="Slightly decreased transcriptase activity." evidence="3">
    <original>D</original>
    <variation>A</variation>
    <location>
        <position position="882"/>
    </location>
</feature>
<feature type="mutagenesis site" description="Does not affect reverse transcriptase activity." evidence="3">
    <original>D</original>
    <variation>N</variation>
    <location>
        <position position="882"/>
    </location>
</feature>
<feature type="mutagenesis site" description="Does not affect reverse transcriptase activity." evidence="3">
    <original>N</original>
    <variation>A</variation>
    <location>
        <position position="884"/>
    </location>
</feature>
<feature type="mutagenesis site" description="Abolished reverse transcriptase activity." evidence="3">
    <original>N</original>
    <variation>D</variation>
    <location>
        <position position="884"/>
    </location>
</feature>
<feature type="mutagenesis site" description="Slightly decreased transcriptase activity." evidence="3">
    <original>T</original>
    <variation>A</variation>
    <location>
        <position position="885"/>
    </location>
</feature>
<feature type="mutagenesis site" description="Does not affect reverse transcriptase activity." evidence="3">
    <original>K</original>
    <variation>A</variation>
    <location>
        <position position="910"/>
    </location>
</feature>
<feature type="mutagenesis site" description="Does not affect reverse transcriptase activity." evidence="3">
    <original>K</original>
    <variation>A</variation>
    <location>
        <position position="1077"/>
    </location>
</feature>
<feature type="helix" evidence="21">
    <location>
        <begin position="17"/>
        <end position="26"/>
    </location>
</feature>
<feature type="strand" evidence="21">
    <location>
        <begin position="32"/>
        <end position="35"/>
    </location>
</feature>
<feature type="helix" evidence="21">
    <location>
        <begin position="36"/>
        <end position="42"/>
    </location>
</feature>
<feature type="strand" evidence="25">
    <location>
        <begin position="48"/>
        <end position="50"/>
    </location>
</feature>
<feature type="helix" evidence="21">
    <location>
        <begin position="54"/>
        <end position="62"/>
    </location>
</feature>
<feature type="strand" evidence="21">
    <location>
        <begin position="64"/>
        <end position="69"/>
    </location>
</feature>
<feature type="helix" evidence="21">
    <location>
        <begin position="73"/>
        <end position="75"/>
    </location>
</feature>
<feature type="strand" evidence="26">
    <location>
        <begin position="79"/>
        <end position="81"/>
    </location>
</feature>
<feature type="helix" evidence="21">
    <location>
        <begin position="89"/>
        <end position="99"/>
    </location>
</feature>
<feature type="turn" evidence="21">
    <location>
        <begin position="100"/>
        <end position="102"/>
    </location>
</feature>
<feature type="helix" evidence="21">
    <location>
        <begin position="107"/>
        <end position="109"/>
    </location>
</feature>
<feature type="strand" evidence="21">
    <location>
        <begin position="113"/>
        <end position="115"/>
    </location>
</feature>
<feature type="strand" evidence="21">
    <location>
        <begin position="118"/>
        <end position="120"/>
    </location>
</feature>
<feature type="turn" evidence="21">
    <location>
        <begin position="129"/>
        <end position="132"/>
    </location>
</feature>
<feature type="helix" evidence="21">
    <location>
        <begin position="134"/>
        <end position="143"/>
    </location>
</feature>
<feature type="helix" evidence="21">
    <location>
        <begin position="145"/>
        <end position="154"/>
    </location>
</feature>
<feature type="strand" evidence="21">
    <location>
        <begin position="156"/>
        <end position="162"/>
    </location>
</feature>
<feature type="strand" evidence="21">
    <location>
        <begin position="165"/>
        <end position="172"/>
    </location>
</feature>
<feature type="helix" evidence="21">
    <location>
        <begin position="174"/>
        <end position="181"/>
    </location>
</feature>
<feature type="strand" evidence="21">
    <location>
        <begin position="188"/>
        <end position="190"/>
    </location>
</feature>
<feature type="helix" evidence="26">
    <location>
        <begin position="226"/>
        <end position="229"/>
    </location>
</feature>
<feature type="strand" evidence="26">
    <location>
        <begin position="237"/>
        <end position="241"/>
    </location>
</feature>
<feature type="strand" evidence="23">
    <location>
        <begin position="243"/>
        <end position="245"/>
    </location>
</feature>
<feature type="helix" evidence="26">
    <location>
        <begin position="246"/>
        <end position="249"/>
    </location>
</feature>
<feature type="helix" evidence="22">
    <location>
        <begin position="281"/>
        <end position="291"/>
    </location>
</feature>
<feature type="helix" evidence="22">
    <location>
        <begin position="301"/>
        <end position="320"/>
    </location>
</feature>
<feature type="helix" evidence="22">
    <location>
        <begin position="323"/>
        <end position="330"/>
    </location>
</feature>
<feature type="helix" evidence="22">
    <location>
        <begin position="337"/>
        <end position="348"/>
    </location>
</feature>
<feature type="helix" evidence="22">
    <location>
        <begin position="356"/>
        <end position="366"/>
    </location>
</feature>
<feature type="helix" evidence="22">
    <location>
        <begin position="367"/>
        <end position="369"/>
    </location>
</feature>
<feature type="helix" evidence="22">
    <location>
        <begin position="373"/>
        <end position="387"/>
    </location>
</feature>
<feature type="helix" evidence="22">
    <location>
        <begin position="390"/>
        <end position="392"/>
    </location>
</feature>
<feature type="helix" evidence="22">
    <location>
        <begin position="395"/>
        <end position="410"/>
    </location>
</feature>
<feature type="helix" evidence="22">
    <location>
        <begin position="419"/>
        <end position="423"/>
    </location>
</feature>
<feature type="helix" evidence="22">
    <location>
        <begin position="428"/>
        <end position="430"/>
    </location>
</feature>
<feature type="turn" evidence="22">
    <location>
        <begin position="441"/>
        <end position="443"/>
    </location>
</feature>
<feature type="helix" evidence="22">
    <location>
        <begin position="445"/>
        <end position="466"/>
    </location>
</feature>
<feature type="helix" evidence="22">
    <location>
        <begin position="468"/>
        <end position="475"/>
    </location>
</feature>
<feature type="strand" evidence="22">
    <location>
        <begin position="476"/>
        <end position="483"/>
    </location>
</feature>
<feature type="strand" evidence="22">
    <location>
        <begin position="488"/>
        <end position="492"/>
    </location>
</feature>
<feature type="helix" evidence="22">
    <location>
        <begin position="493"/>
        <end position="509"/>
    </location>
</feature>
<feature type="turn" evidence="22">
    <location>
        <begin position="510"/>
        <end position="516"/>
    </location>
</feature>
<feature type="turn" evidence="26">
    <location>
        <begin position="517"/>
        <end position="519"/>
    </location>
</feature>
<feature type="helix" evidence="26">
    <location>
        <begin position="522"/>
        <end position="527"/>
    </location>
</feature>
<feature type="strand" evidence="26">
    <location>
        <begin position="531"/>
        <end position="538"/>
    </location>
</feature>
<feature type="strand" evidence="26">
    <location>
        <begin position="541"/>
        <end position="547"/>
    </location>
</feature>
<feature type="helix" evidence="26">
    <location>
        <begin position="554"/>
        <end position="556"/>
    </location>
</feature>
<feature type="helix" evidence="26">
    <location>
        <begin position="561"/>
        <end position="564"/>
    </location>
</feature>
<feature type="helix" evidence="26">
    <location>
        <begin position="566"/>
        <end position="578"/>
    </location>
</feature>
<feature type="turn" evidence="26">
    <location>
        <begin position="579"/>
        <end position="581"/>
    </location>
</feature>
<feature type="strand" evidence="26">
    <location>
        <begin position="582"/>
        <end position="584"/>
    </location>
</feature>
<feature type="helix" evidence="26">
    <location>
        <begin position="590"/>
        <end position="607"/>
    </location>
</feature>
<feature type="strand" evidence="26">
    <location>
        <begin position="613"/>
        <end position="621"/>
    </location>
</feature>
<feature type="helix" evidence="26">
    <location>
        <begin position="623"/>
        <end position="625"/>
    </location>
</feature>
<feature type="helix" evidence="26">
    <location>
        <begin position="628"/>
        <end position="637"/>
    </location>
</feature>
<feature type="strand" evidence="26">
    <location>
        <begin position="639"/>
        <end position="641"/>
    </location>
</feature>
<feature type="strand" evidence="26">
    <location>
        <begin position="643"/>
        <end position="655"/>
    </location>
</feature>
<feature type="helix" evidence="26">
    <location>
        <begin position="692"/>
        <end position="694"/>
    </location>
</feature>
<feature type="strand" evidence="26">
    <location>
        <begin position="696"/>
        <end position="708"/>
    </location>
</feature>
<feature type="helix" evidence="26">
    <location>
        <begin position="714"/>
        <end position="717"/>
    </location>
</feature>
<feature type="strand" evidence="26">
    <location>
        <begin position="724"/>
        <end position="726"/>
    </location>
</feature>
<feature type="strand" evidence="26">
    <location>
        <begin position="729"/>
        <end position="733"/>
    </location>
</feature>
<feature type="strand" evidence="26">
    <location>
        <begin position="738"/>
        <end position="741"/>
    </location>
</feature>
<feature type="helix" evidence="26">
    <location>
        <begin position="742"/>
        <end position="754"/>
    </location>
</feature>
<feature type="strand" evidence="26">
    <location>
        <begin position="757"/>
        <end position="762"/>
    </location>
</feature>
<feature type="strand" evidence="26">
    <location>
        <begin position="764"/>
        <end position="767"/>
    </location>
</feature>
<feature type="strand" evidence="24">
    <location>
        <begin position="768"/>
        <end position="770"/>
    </location>
</feature>
<feature type="helix" evidence="26">
    <location>
        <begin position="778"/>
        <end position="792"/>
    </location>
</feature>
<feature type="helix" evidence="26">
    <location>
        <begin position="795"/>
        <end position="803"/>
    </location>
</feature>
<feature type="strand" evidence="26">
    <location>
        <begin position="808"/>
        <end position="813"/>
    </location>
</feature>
<feature type="strand" evidence="26">
    <location>
        <begin position="816"/>
        <end position="822"/>
    </location>
</feature>
<feature type="helix" evidence="26">
    <location>
        <begin position="824"/>
        <end position="841"/>
    </location>
</feature>
<feature type="helix" evidence="26">
    <location>
        <begin position="846"/>
        <end position="848"/>
    </location>
</feature>
<feature type="strand" evidence="26">
    <location>
        <begin position="849"/>
        <end position="854"/>
    </location>
</feature>
<feature type="turn" evidence="26">
    <location>
        <begin position="858"/>
        <end position="862"/>
    </location>
</feature>
<feature type="strand" evidence="26">
    <location>
        <begin position="867"/>
        <end position="870"/>
    </location>
</feature>
<feature type="strand" evidence="26">
    <location>
        <begin position="872"/>
        <end position="876"/>
    </location>
</feature>
<feature type="strand" evidence="26">
    <location>
        <begin position="879"/>
        <end position="881"/>
    </location>
</feature>
<feature type="strand" evidence="26">
    <location>
        <begin position="883"/>
        <end position="885"/>
    </location>
</feature>
<feature type="strand" evidence="26">
    <location>
        <begin position="888"/>
        <end position="890"/>
    </location>
</feature>
<feature type="helix" evidence="26">
    <location>
        <begin position="896"/>
        <end position="900"/>
    </location>
</feature>
<feature type="helix" evidence="26">
    <location>
        <begin position="909"/>
        <end position="911"/>
    </location>
</feature>
<feature type="helix" evidence="26">
    <location>
        <begin position="912"/>
        <end position="925"/>
    </location>
</feature>
<feature type="turn" evidence="26">
    <location>
        <begin position="926"/>
        <end position="930"/>
    </location>
</feature>
<feature type="turn" evidence="26">
    <location>
        <begin position="934"/>
        <end position="936"/>
    </location>
</feature>
<feature type="helix" evidence="26">
    <location>
        <begin position="939"/>
        <end position="964"/>
    </location>
</feature>
<feature type="helix" evidence="26">
    <location>
        <begin position="969"/>
        <end position="971"/>
    </location>
</feature>
<feature type="helix" evidence="26">
    <location>
        <begin position="973"/>
        <end position="979"/>
    </location>
</feature>
<feature type="strand" evidence="26">
    <location>
        <begin position="981"/>
        <end position="983"/>
    </location>
</feature>
<feature type="helix" evidence="26">
    <location>
        <begin position="984"/>
        <end position="1008"/>
    </location>
</feature>
<feature type="strand" evidence="24">
    <location>
        <begin position="1011"/>
        <end position="1013"/>
    </location>
</feature>
<feature type="helix" evidence="26">
    <location>
        <begin position="1015"/>
        <end position="1037"/>
    </location>
</feature>
<feature type="turn" evidence="26">
    <location>
        <begin position="1042"/>
        <end position="1045"/>
    </location>
</feature>
<feature type="helix" evidence="26">
    <location>
        <begin position="1046"/>
        <end position="1074"/>
    </location>
</feature>
<feature type="helix" evidence="26">
    <location>
        <begin position="1082"/>
        <end position="1093"/>
    </location>
</feature>
<feature type="turn" evidence="26">
    <location>
        <begin position="1094"/>
        <end position="1098"/>
    </location>
</feature>
<feature type="turn" evidence="26">
    <location>
        <begin position="1101"/>
        <end position="1103"/>
    </location>
</feature>
<feature type="helix" evidence="26">
    <location>
        <begin position="1104"/>
        <end position="1107"/>
    </location>
</feature>
<comment type="function">
    <text evidence="3 4 5 6 8">Catalytic component of telomerase, an essential ribonucleoprotein enzyme that copies new telomeric repeats onto chromosome ends by repetitively synthesizing the short telomere-repeat sequence 5'-TTGGGG-3' using an RNA template component TER (PubMed:10944124, PubMed:15696174, PubMed:16462747, PubMed:17322903, PubMed:20713447). TERT is a reverse transcriptase that adds simple sequence repeats to chromosome ends by copying a template sequence within the RNA component of the enzyme (PubMed:10944124, PubMed:15696174, PubMed:16462747, PubMed:17322903, PubMed:20713447).</text>
</comment>
<comment type="catalytic activity">
    <reaction evidence="3 4 5 8">
        <text>DNA(n) + a 2'-deoxyribonucleoside 5'-triphosphate = DNA(n+1) + diphosphate</text>
        <dbReference type="Rhea" id="RHEA:22508"/>
        <dbReference type="Rhea" id="RHEA-COMP:17339"/>
        <dbReference type="Rhea" id="RHEA-COMP:17340"/>
        <dbReference type="ChEBI" id="CHEBI:33019"/>
        <dbReference type="ChEBI" id="CHEBI:61560"/>
        <dbReference type="ChEBI" id="CHEBI:173112"/>
        <dbReference type="EC" id="2.7.7.49"/>
    </reaction>
</comment>
<comment type="subunit">
    <text evidence="4 6 7 8 9 10 11">Component of the telomerase holoenzyme complex, composed of the catalytic core (the catalytic subunit TERT, the telomerase RNA template component TER and TAP65/p65), which is associated with two heterotrimeric subcomplexes: (i) the replication protein A (RPA)-related subcomplex, composed of TEB1, RPA2/TEB2 and RPA3/TEB3 and (ii) the CST-like subcomplex, composed of TAP75/p75, TAP45/p45 and TAP19/p19 (PubMed:15696174, PubMed:17322903, PubMed:19941821, PubMed:20713447, PubMed:23552895, PubMed:26472759, PubMed:29775593). TEB1 and the CST-like subcomplex are tethered to the catalytic core by TAP50/p50 (PubMed:19941821, PubMed:23552895, PubMed:26472759, PubMed:29775593).</text>
</comment>
<comment type="subcellular location">
    <subcellularLocation>
        <location evidence="2">Nucleus</location>
    </subcellularLocation>
    <subcellularLocation>
        <location evidence="2 5">Chromosome</location>
        <location evidence="2 5">Telomere</location>
    </subcellularLocation>
</comment>
<comment type="similarity">
    <text evidence="2">Belongs to the reverse transcriptase family. Telomerase subfamily.</text>
</comment>
<protein>
    <recommendedName>
        <fullName>Telomerase reverse transcriptase</fullName>
        <ecNumber evidence="3 4 5 8">2.7.7.49</ecNumber>
    </recommendedName>
    <alternativeName>
        <fullName>Telomerase catalytic subunit</fullName>
    </alternativeName>
    <alternativeName>
        <fullName evidence="13">Telomerase subunit P133</fullName>
    </alternativeName>
</protein>
<organism>
    <name type="scientific">Tetrahymena thermophila (strain SB210)</name>
    <dbReference type="NCBI Taxonomy" id="312017"/>
    <lineage>
        <taxon>Eukaryota</taxon>
        <taxon>Sar</taxon>
        <taxon>Alveolata</taxon>
        <taxon>Ciliophora</taxon>
        <taxon>Intramacronucleata</taxon>
        <taxon>Oligohymenophorea</taxon>
        <taxon>Hymenostomatida</taxon>
        <taxon>Tetrahymenina</taxon>
        <taxon>Tetrahymenidae</taxon>
        <taxon>Tetrahymena</taxon>
    </lineage>
</organism>
<evidence type="ECO:0000255" key="1">
    <source>
        <dbReference type="PROSITE-ProRule" id="PRU00405"/>
    </source>
</evidence>
<evidence type="ECO:0000255" key="2">
    <source>
        <dbReference type="RuleBase" id="RU365061"/>
    </source>
</evidence>
<evidence type="ECO:0000269" key="3">
    <source>
    </source>
</evidence>
<evidence type="ECO:0000269" key="4">
    <source>
    </source>
</evidence>
<evidence type="ECO:0000269" key="5">
    <source>
    </source>
</evidence>
<evidence type="ECO:0000269" key="6">
    <source>
    </source>
</evidence>
<evidence type="ECO:0000269" key="7">
    <source>
    </source>
</evidence>
<evidence type="ECO:0000269" key="8">
    <source>
    </source>
</evidence>
<evidence type="ECO:0000269" key="9">
    <source>
    </source>
</evidence>
<evidence type="ECO:0000269" key="10">
    <source>
    </source>
</evidence>
<evidence type="ECO:0000269" key="11">
    <source>
    </source>
</evidence>
<evidence type="ECO:0000303" key="12">
    <source>
    </source>
</evidence>
<evidence type="ECO:0000303" key="13">
    <source>
    </source>
</evidence>
<evidence type="ECO:0000305" key="14">
    <source>
    </source>
</evidence>
<evidence type="ECO:0000305" key="15">
    <source>
    </source>
</evidence>
<evidence type="ECO:0000312" key="16">
    <source>
        <dbReference type="EMBL" id="EAR90406.3"/>
    </source>
</evidence>
<evidence type="ECO:0007744" key="17">
    <source>
        <dbReference type="PDB" id="2B2A"/>
    </source>
</evidence>
<evidence type="ECO:0007744" key="18">
    <source>
        <dbReference type="PDB" id="2R4G"/>
    </source>
</evidence>
<evidence type="ECO:0007744" key="19">
    <source>
        <dbReference type="PDB" id="5C9H"/>
    </source>
</evidence>
<evidence type="ECO:0007744" key="20">
    <source>
        <dbReference type="PDB" id="6D6V"/>
    </source>
</evidence>
<evidence type="ECO:0007829" key="21">
    <source>
        <dbReference type="PDB" id="2B2A"/>
    </source>
</evidence>
<evidence type="ECO:0007829" key="22">
    <source>
        <dbReference type="PDB" id="2R4G"/>
    </source>
</evidence>
<evidence type="ECO:0007829" key="23">
    <source>
        <dbReference type="PDB" id="5C9H"/>
    </source>
</evidence>
<evidence type="ECO:0007829" key="24">
    <source>
        <dbReference type="PDB" id="7LMA"/>
    </source>
</evidence>
<evidence type="ECO:0007829" key="25">
    <source>
        <dbReference type="PDB" id="7UY5"/>
    </source>
</evidence>
<evidence type="ECO:0007829" key="26">
    <source>
        <dbReference type="PDB" id="7UY6"/>
    </source>
</evidence>
<gene>
    <name evidence="12" type="primary">TERT</name>
    <name evidence="16" type="ORF">TTHERM_00112560</name>
</gene>
<name>TERT_TETTS</name>
<reference key="1">
    <citation type="journal article" date="1998" name="Proc. Natl. Acad. Sci. U.S.A.">
        <title>Telomerase reverse transcriptase genes identified in Tetrahymena thermophila and Oxytricha trifallax.</title>
        <authorList>
            <person name="Bryan T.M."/>
            <person name="Sperger J.M."/>
            <person name="Chapman K.B."/>
            <person name="Cech T.R."/>
        </authorList>
    </citation>
    <scope>NUCLEOTIDE SEQUENCE [GENOMIC DNA]</scope>
</reference>
<reference key="2">
    <citation type="journal article" date="1998" name="Proc. Natl. Acad. Sci. U.S.A.">
        <title>The reverse transcriptase component of the Tetrahymena telomerase ribonucleoprotein complex.</title>
        <authorList>
            <person name="Collins K."/>
            <person name="Gandhi L."/>
        </authorList>
    </citation>
    <scope>NUCLEOTIDE SEQUENCE [MRNA]</scope>
</reference>
<reference key="3">
    <citation type="journal article" date="2006" name="PLoS Biol.">
        <title>Macronuclear genome sequence of the ciliate Tetrahymena thermophila, a model eukaryote.</title>
        <authorList>
            <person name="Eisen J.A."/>
            <person name="Coyne R.S."/>
            <person name="Wu M."/>
            <person name="Wu D."/>
            <person name="Thiagarajan M."/>
            <person name="Wortman J.R."/>
            <person name="Badger J.H."/>
            <person name="Ren Q."/>
            <person name="Amedeo P."/>
            <person name="Jones K.M."/>
            <person name="Tallon L.J."/>
            <person name="Delcher A.L."/>
            <person name="Salzberg S.L."/>
            <person name="Silva J.C."/>
            <person name="Haas B.J."/>
            <person name="Majoros W.H."/>
            <person name="Farzad M."/>
            <person name="Carlton J.M."/>
            <person name="Smith R.K. Jr."/>
            <person name="Garg J."/>
            <person name="Pearlman R.E."/>
            <person name="Karrer K.M."/>
            <person name="Sun L."/>
            <person name="Manning G."/>
            <person name="Elde N.C."/>
            <person name="Turkewitz A.P."/>
            <person name="Asai D.J."/>
            <person name="Wilkes D.E."/>
            <person name="Wang Y."/>
            <person name="Cai H."/>
            <person name="Collins K."/>
            <person name="Stewart B.A."/>
            <person name="Lee S.R."/>
            <person name="Wilamowska K."/>
            <person name="Weinberg Z."/>
            <person name="Ruzzo W.L."/>
            <person name="Wloga D."/>
            <person name="Gaertig J."/>
            <person name="Frankel J."/>
            <person name="Tsao C.-C."/>
            <person name="Gorovsky M.A."/>
            <person name="Keeling P.J."/>
            <person name="Waller R.F."/>
            <person name="Patron N.J."/>
            <person name="Cherry J.M."/>
            <person name="Stover N.A."/>
            <person name="Krieger C.J."/>
            <person name="del Toro C."/>
            <person name="Ryder H.F."/>
            <person name="Williamson S.C."/>
            <person name="Barbeau R.A."/>
            <person name="Hamilton E.P."/>
            <person name="Orias E."/>
        </authorList>
    </citation>
    <scope>NUCLEOTIDE SEQUENCE [LARGE SCALE GENOMIC DNA]</scope>
    <source>
        <strain>SB210</strain>
    </source>
</reference>
<reference key="4">
    <citation type="journal article" date="2000" name="EMBO J.">
        <title>Template definition by Tetrahymena telomerase reverse transcriptase.</title>
        <authorList>
            <person name="Miller M.C."/>
            <person name="Liu J.K."/>
            <person name="Collins K."/>
        </authorList>
    </citation>
    <scope>FUNCTION</scope>
    <scope>CATALYTIC ACTIVITY</scope>
    <scope>MUTAGENESIS OF PHE-158; GLN-168; ARG-226; PHE-230; TYR-231; CYS-232; HIS-234; ARG-237; CYS-331; PHE-379; ARG-381; PRO-389; TRP-433; PHE-462; ARG-473; TYR-477; THR-479; GLU-480; ARG-492; LYS-493; LYS-532; ARG-534; LYS-538; LYS-539; PHE-542; ARG-543; TYR-623; ASP-624; GLN-767; GLN-773; SER-778; ARG-812; LYS-849; PHE-854; TRP-876; GLY-878; SER-880; ASP-882; ASN-884; THR-885; LYS-910 AND LYS-1077</scope>
</reference>
<reference key="5">
    <citation type="journal article" date="2005" name="Nat. Struct. Mol. Biol.">
        <title>A telomerase holoenzyme protein enhances telomerase RNA assembly with telomerase reverse transcriptase.</title>
        <authorList>
            <person name="Prathapam R."/>
            <person name="Witkin K.L."/>
            <person name="O'Connor C.M."/>
            <person name="Collins K."/>
        </authorList>
    </citation>
    <scope>FUNCTION</scope>
    <scope>CATALYTIC ACTIVITY</scope>
    <scope>IDENTIFICATION IN THE TELOMERASE HOLOENZYME COMPLEX</scope>
</reference>
<reference key="6">
    <citation type="journal article" date="2007" name="Nature">
        <title>Stepwise protein-mediated RNA folding directs assembly of telomerase ribonucleoprotein.</title>
        <authorList>
            <person name="Stone M.D."/>
            <person name="Mihalusova M."/>
            <person name="O'connor C.M."/>
            <person name="Prathapam R."/>
            <person name="Collins K."/>
            <person name="Zhuang X."/>
        </authorList>
    </citation>
    <scope>FUNCTION</scope>
    <scope>IDENTIFICATION IN THE TELOMERASE HOLOENZYME COMPLEX</scope>
</reference>
<reference key="7">
    <citation type="journal article" date="2010" name="Mol. Cell. Biol.">
        <title>Tetrahymena telomerase protein p65 induces conformational changes throughout telomerase RNA (TER) and rescues telomerase reverse transcriptase and TER assembly mutants.</title>
        <authorList>
            <person name="Berman A.J."/>
            <person name="Gooding A.R."/>
            <person name="Cech T.R."/>
        </authorList>
    </citation>
    <scope>FUNCTION</scope>
    <scope>CATALYTIC ACTIVITY</scope>
    <scope>IDENTIFICATION IN THE TELOMERASE HOLOENZYME COMPLEX</scope>
    <scope>MUTAGENESIS OF LEU-327; PRO-334 AND ASP-618</scope>
</reference>
<reference key="8">
    <citation type="journal article" date="2009" name="Mol. Cell">
        <title>An RPA-related sequence-specific DNA-binding subunit of telomerase holoenzyme is required for elongation processivity and telomere maintenance.</title>
        <authorList>
            <person name="Min B."/>
            <person name="Collins K."/>
        </authorList>
    </citation>
    <scope>IDENTIFICATION IN THE TELOMERASE HOLOENZYME</scope>
</reference>
<reference evidence="17" key="9">
    <citation type="journal article" date="2006" name="Nat. Struct. Mol. Biol.">
        <title>Crystal structure of the essential N-terminal domain of telomerase reverse transcriptase.</title>
        <authorList>
            <person name="Jacobs S.A."/>
            <person name="Podell E.R."/>
            <person name="Cech T.R."/>
        </authorList>
    </citation>
    <scope>X-RAY CRYSTALLOGRAPHY (2.22 ANGSTROMS) OF 2-191</scope>
    <scope>FUNCTION</scope>
    <scope>CATALYTIC ACTIVITY</scope>
    <scope>SUBCELLULAR LOCATION</scope>
    <scope>MUTAGENESIS OF ASP-94; LYS-103; 145-GLU-GLU-146; GLN-168; LEU-174; PHE-178; 183-LYS--LYS-186; 183-LYS--LYS-189; 185-LYS-LYS-186; LYS-185; TRP-187; TYR-188 AND LYS-189</scope>
</reference>
<reference evidence="18" key="10">
    <citation type="journal article" date="2007" name="Structure">
        <title>Structure of the RNA-binding domain of telomerase: implications for RNA recognition and binding.</title>
        <authorList>
            <person name="Rouda S."/>
            <person name="Skordalakes E."/>
        </authorList>
    </citation>
    <scope>X-RAY CRYSTALLOGRAPHY (1.71 ANGSTROMS) OF 254-519</scope>
</reference>
<reference key="11">
    <citation type="journal article" date="2013" name="Nature">
        <title>The architecture of Tetrahymena telomerase holoenzyme.</title>
        <authorList>
            <person name="Jiang J."/>
            <person name="Miracco E.J."/>
            <person name="Hong K."/>
            <person name="Eckert B."/>
            <person name="Chan H."/>
            <person name="Cash D.D."/>
            <person name="Min B."/>
            <person name="Zhou Z.H."/>
            <person name="Collins K."/>
            <person name="Feigon J."/>
        </authorList>
    </citation>
    <scope>STRUCTURE BY ELECTRON MICROSCOPY OF THE TELOMERASE HOLOENZYME</scope>
</reference>
<reference evidence="19" key="12">
    <citation type="journal article" date="2015" name="Nat. Struct. Mol. Biol.">
        <title>Structural basis of template-boundary definition in Tetrahymena telomerase.</title>
        <authorList>
            <person name="Jansson L.I."/>
            <person name="Akiyama B.M."/>
            <person name="Ooms A."/>
            <person name="Lu C."/>
            <person name="Rubin S.M."/>
            <person name="Stone M.D."/>
        </authorList>
    </citation>
    <scope>X-RAY CRYSTALLOGRAPHY (3.00 ANGSTROMS) OF 217-516 IN COMPLEX WITH TER RNA</scope>
</reference>
<reference key="13">
    <citation type="journal article" date="2015" name="Science">
        <title>Structure of Tetrahymena telomerase reveals previously unknown subunits, functions, and interactions.</title>
        <authorList>
            <person name="Jiang J."/>
            <person name="Chan H."/>
            <person name="Cash D.D."/>
            <person name="Miracco E.J."/>
            <person name="Ogorzalek Loo R.R."/>
            <person name="Upton H.E."/>
            <person name="Cascio D."/>
            <person name="O'Brien Johnson R."/>
            <person name="Collins K."/>
            <person name="Loo J.A."/>
            <person name="Zhou Z.H."/>
            <person name="Feigon J."/>
        </authorList>
    </citation>
    <scope>STRUCTURE BY ELECTRON MICROSCOPY OF THE TELOMERASE HOLOENZYME</scope>
    <scope>MUTAGENESIS OF LYS-90 AND ARG-137</scope>
</reference>
<reference evidence="20" key="14">
    <citation type="journal article" date="2018" name="Cell">
        <title>Structure of telomerase with telomeric DNA.</title>
        <authorList>
            <person name="Jiang J."/>
            <person name="Wang Y."/>
            <person name="Susac L."/>
            <person name="Chan H."/>
            <person name="Basu R."/>
            <person name="Zhou Z.H."/>
            <person name="Feigon J."/>
        </authorList>
    </citation>
    <scope>STRUCTURE BY ELECTRON MICROSCOPY (4.80 ANGSTROMS) OF THE TELOMERASE HOLOENZYME IN COMPLEX WITH TELOMERIC DNA AND TER RNA</scope>
</reference>
<accession>O77448</accession>
<accession>Q22ZB5</accession>
<proteinExistence type="evidence at protein level"/>
<keyword id="KW-0002">3D-structure</keyword>
<keyword id="KW-0158">Chromosome</keyword>
<keyword id="KW-0238">DNA-binding</keyword>
<keyword id="KW-0460">Magnesium</keyword>
<keyword id="KW-0479">Metal-binding</keyword>
<keyword id="KW-0548">Nucleotidyltransferase</keyword>
<keyword id="KW-0539">Nucleus</keyword>
<keyword id="KW-1185">Reference proteome</keyword>
<keyword id="KW-0694">RNA-binding</keyword>
<keyword id="KW-0695">RNA-directed DNA polymerase</keyword>
<keyword id="KW-0779">Telomere</keyword>
<keyword id="KW-0808">Transferase</keyword>
<sequence length="1117" mass="133318">MQKINNINNNKQMLTRKEDLLTVLKQISALKYVSNLYEFLLATEKIVQTSELDTQFQEFLTTTIIASEQNLVENYKQKYNQPNFSQLTIKQVIDDSIILLGNKQNYVQQIGTTTIGFYVEYENINLSRQTLYSSNFRNLLNIFGEEDFKYFLIDFLVFTKVEQNGYLQVAGVCLNQYFSVQVKQKKWYKNNFNMNGKATSNNNQNNANLSNEKKQENQYIYPEIQRSQIFYCNHMGREPGVFKSSFFNYSEIKKGFQFKVIQEKLQGRQFINSDKIKPDHPQTIIKKTLLKEYQSKNFSCQEERDLFLEFTEKIVQNFHNINFNYLLKKFCKLPENYQSLKSQVKQIVQSENKANQQSCENLFNSLYDTEISYKQITNFLRQIIQNCVPNQLLGKKNFKVFLEKLYEFVQMKRFENQKVLDYICFMDVFDVEWFVDLKNQKFTQKRKYISDKRKILGDLIVFIINKIVIPVLRYNFYITEKHKEGSQIFYYRKPIWKLVSKLTIVKLEEENLEKVEEKLIPEDSFQKYPQGKLRIIPKKGSFRPIMTFLRKDKQKNIKLNLNQILMDSQLVFRNLKDMLGQKIGYSVFDNKQISEKFAQFIEKWKNKGRPQLYYVTLDIKKCYDSIDQMKLLNFFNQSDLIQDTYFINKYLLFQRNKRPLLQIQQTNNLNSAMEIEEEKINKKPFKMDNINFPYYFNLKERQIAYSLYDDDDQILQKGFKEIQSDDRPFIVINQDKPRCITKDIIHNHLKHISQYNVISFNKVKFRQKRGIPQGLNISGVLCSFYFGKLEEEYTQFLKNAEQVNGSINLLMRLTDDYLFISDSQQNALNLIVQLQNCANNNGFMFNDQKITTNFQFPQEDYNLEHFKISVQNECQWIGKSIDMNTLEIKSIQKQTQQEINQTINVAISIKNLKSQLKNKLRSLFLNQLIDYFNPNINSFEGLCRQLYHHSKATVMKFYPFMTKLFQIDLKKSKQYSVQYGKENTNENFLKDILYYTVEDVCKILCYLQFEDEINSNIKEIFKNLYSWIMWDIIVSYLKKKKQFKGYLNKLLQKIRKSRFFYLKEGCKSLQLILSQQKYQLNKKELEAIEFIDLNNLIQDIKTLIPKISAKSNQQNTN</sequence>